<keyword id="KW-0551">Lipid droplet</keyword>
<keyword id="KW-0520">NAD</keyword>
<keyword id="KW-0521">NADP</keyword>
<keyword id="KW-0560">Oxidoreductase</keyword>
<keyword id="KW-1185">Reference proteome</keyword>
<keyword id="KW-0964">Secreted</keyword>
<proteinExistence type="evidence at protein level"/>
<comment type="function">
    <text evidence="1">Oxidoreductase that plays a key role in early steps of protein N-linked glycosylation by mediating two non-consecutive steps in dolichol biosynthesis. Acts both as a NAD(+)-dependent dehydrogenase and as a NADPH-dependent reductase during the conversion of polyprenol into dolichol. First catalyzes the NAD(+)-dependent dehydrogenation of polyprenol into polyprenal; polyprenal is then reduced into dolichal by SRD5A3. It then catalyzes the NADPH-dependent reduction of dolichal into dolichol. May also acts as a positive regulator of starvation-induced autophagy.</text>
</comment>
<comment type="catalytic activity">
    <reaction evidence="1">
        <text>a di-trans,poly-cis-polyprenol + NAD(+) = a di-trans,poly-cis-polyprenal + NADH + H(+)</text>
        <dbReference type="Rhea" id="RHEA:80719"/>
        <dbReference type="Rhea" id="RHEA-COMP:19496"/>
        <dbReference type="Rhea" id="RHEA-COMP:19536"/>
        <dbReference type="ChEBI" id="CHEBI:15378"/>
        <dbReference type="ChEBI" id="CHEBI:57540"/>
        <dbReference type="ChEBI" id="CHEBI:57945"/>
        <dbReference type="ChEBI" id="CHEBI:67132"/>
        <dbReference type="ChEBI" id="CHEBI:231623"/>
        <dbReference type="EC" id="1.1.1.441"/>
    </reaction>
    <physiologicalReaction direction="left-to-right" evidence="1">
        <dbReference type="Rhea" id="RHEA:80720"/>
    </physiologicalReaction>
</comment>
<comment type="catalytic activity">
    <reaction evidence="1">
        <text>a di-trans,poly-cis-polyprenol + NADP(+) = a di-trans,poly-cis-polyprenal + NADPH + H(+)</text>
        <dbReference type="Rhea" id="RHEA:80723"/>
        <dbReference type="Rhea" id="RHEA-COMP:19496"/>
        <dbReference type="Rhea" id="RHEA-COMP:19536"/>
        <dbReference type="ChEBI" id="CHEBI:15378"/>
        <dbReference type="ChEBI" id="CHEBI:57783"/>
        <dbReference type="ChEBI" id="CHEBI:58349"/>
        <dbReference type="ChEBI" id="CHEBI:67132"/>
        <dbReference type="ChEBI" id="CHEBI:231623"/>
        <dbReference type="EC" id="1.1.1.441"/>
    </reaction>
    <physiologicalReaction direction="left-to-right" evidence="1">
        <dbReference type="Rhea" id="RHEA:80724"/>
    </physiologicalReaction>
</comment>
<comment type="catalytic activity">
    <reaction evidence="1">
        <text>a di-trans,poly-cis-dolichol + NADP(+) = a di-trans,poly-cis-dolichal + NADPH + H(+)</text>
        <dbReference type="Rhea" id="RHEA:80731"/>
        <dbReference type="Rhea" id="RHEA-COMP:19495"/>
        <dbReference type="Rhea" id="RHEA-COMP:19537"/>
        <dbReference type="ChEBI" id="CHEBI:15378"/>
        <dbReference type="ChEBI" id="CHEBI:16091"/>
        <dbReference type="ChEBI" id="CHEBI:57783"/>
        <dbReference type="ChEBI" id="CHEBI:58349"/>
        <dbReference type="ChEBI" id="CHEBI:231637"/>
        <dbReference type="EC" id="1.1.1.441"/>
    </reaction>
    <physiologicalReaction direction="right-to-left" evidence="1">
        <dbReference type="Rhea" id="RHEA:80733"/>
    </physiologicalReaction>
</comment>
<comment type="catalytic activity">
    <reaction evidence="1">
        <text>a di-trans,poly-cis-dolichol + NAD(+) = a di-trans,poly-cis-dolichal + NADH + H(+)</text>
        <dbReference type="Rhea" id="RHEA:80735"/>
        <dbReference type="Rhea" id="RHEA-COMP:19495"/>
        <dbReference type="Rhea" id="RHEA-COMP:19537"/>
        <dbReference type="ChEBI" id="CHEBI:15378"/>
        <dbReference type="ChEBI" id="CHEBI:16091"/>
        <dbReference type="ChEBI" id="CHEBI:57540"/>
        <dbReference type="ChEBI" id="CHEBI:57945"/>
        <dbReference type="ChEBI" id="CHEBI:231637"/>
        <dbReference type="EC" id="1.1.1.441"/>
    </reaction>
    <physiologicalReaction direction="right-to-left" evidence="1">
        <dbReference type="Rhea" id="RHEA:80737"/>
    </physiologicalReaction>
</comment>
<comment type="pathway">
    <text evidence="1">Protein modification; protein glycosylation.</text>
</comment>
<comment type="subcellular location">
    <subcellularLocation>
        <location evidence="1">Lipid droplet</location>
    </subcellularLocation>
    <subcellularLocation>
        <location evidence="1">Secreted</location>
    </subcellularLocation>
    <text evidence="1">Secreted in a non-classical form; a signal peptide sequence at position 1-31 is predicted.</text>
</comment>
<comment type="miscellaneous">
    <text evidence="5">Autosomal gene, which is the ortholog of human DHRSX, located at the termini of the long and short arms of the X and Y chromosomes.</text>
</comment>
<comment type="similarity">
    <text evidence="4">Belongs to the short-chain dehydrogenases/reductases (SDR) family.</text>
</comment>
<evidence type="ECO:0000250" key="1">
    <source>
        <dbReference type="UniProtKB" id="Q8N5I4"/>
    </source>
</evidence>
<evidence type="ECO:0000250" key="2">
    <source>
        <dbReference type="UniProtKB" id="Q99714"/>
    </source>
</evidence>
<evidence type="ECO:0000255" key="3">
    <source>
        <dbReference type="PROSITE-ProRule" id="PRU10001"/>
    </source>
</evidence>
<evidence type="ECO:0000305" key="4"/>
<evidence type="ECO:0000305" key="5">
    <source>
    </source>
</evidence>
<gene>
    <name type="primary">Dhrsx</name>
    <name type="synonym">Pscad</name>
</gene>
<protein>
    <recommendedName>
        <fullName evidence="4">Polyprenol dehydrogenase</fullName>
        <ecNumber evidence="1">1.1.1.441</ecNumber>
    </recommendedName>
    <alternativeName>
        <fullName>Dehydrogenase/reductase SDR family member on chromosome Y</fullName>
    </alternativeName>
    <alternativeName>
        <fullName evidence="4">Dolichal reductase</fullName>
    </alternativeName>
    <alternativeName>
        <fullName>SCAD family protein</fullName>
    </alternativeName>
</protein>
<name>DHRSX_MOUSE</name>
<sequence length="335" mass="35957">MSTLRALRAVLCVYAVGIAVALAQLLRRLRGDFRPPVLPPQPGRVAIVTGATAGIGRSTARQLARLGMCVVVAGNDEHRGQEVVSSIRAEMGSDRAHFLPLDLASLASVRGFARDFQALGLPLHLLVNNAGVMLEPRAETEDGFERHLGVNFLGHFLLTLLLLPALRASGAEGRGSRVVTVGSATHYVGTVDMADLHGRHAYSPYAAYAQSKLALALFALQLQRILDARGDPVTSNMADPGVVDTELYRHAGWVLRTAKRFLGWLVFKSPEEGAWTLVYAAAAPELEGVGGRYLRDEAEAEPLGTARDQELQRRLWAEGLRLTGAGGGDSDGVAW</sequence>
<accession>Q8VBZ0</accession>
<accession>B2RRV9</accession>
<accession>Q3TZW6</accession>
<organism>
    <name type="scientific">Mus musculus</name>
    <name type="common">Mouse</name>
    <dbReference type="NCBI Taxonomy" id="10090"/>
    <lineage>
        <taxon>Eukaryota</taxon>
        <taxon>Metazoa</taxon>
        <taxon>Chordata</taxon>
        <taxon>Craniata</taxon>
        <taxon>Vertebrata</taxon>
        <taxon>Euteleostomi</taxon>
        <taxon>Mammalia</taxon>
        <taxon>Eutheria</taxon>
        <taxon>Euarchontoglires</taxon>
        <taxon>Glires</taxon>
        <taxon>Rodentia</taxon>
        <taxon>Myomorpha</taxon>
        <taxon>Muroidea</taxon>
        <taxon>Muridae</taxon>
        <taxon>Murinae</taxon>
        <taxon>Mus</taxon>
        <taxon>Mus</taxon>
    </lineage>
</organism>
<dbReference type="EC" id="1.1.1.441" evidence="1"/>
<dbReference type="EMBL" id="AK157461">
    <property type="protein sequence ID" value="BAE34091.1"/>
    <property type="molecule type" value="mRNA"/>
</dbReference>
<dbReference type="EMBL" id="BC138597">
    <property type="protein sequence ID" value="AAI38598.1"/>
    <property type="molecule type" value="mRNA"/>
</dbReference>
<dbReference type="EMBL" id="BC138599">
    <property type="protein sequence ID" value="AAI38600.1"/>
    <property type="molecule type" value="mRNA"/>
</dbReference>
<dbReference type="EMBL" id="AJ296079">
    <property type="protein sequence ID" value="CAC82539.1"/>
    <property type="molecule type" value="mRNA"/>
</dbReference>
<dbReference type="SMR" id="Q8VBZ0"/>
<dbReference type="FunCoup" id="Q8VBZ0">
    <property type="interactions" value="49"/>
</dbReference>
<dbReference type="STRING" id="10090.ENSMUSP00000076472"/>
<dbReference type="iPTMnet" id="Q8VBZ0"/>
<dbReference type="PhosphoSitePlus" id="Q8VBZ0"/>
<dbReference type="PaxDb" id="10090-ENSMUSP00000076472"/>
<dbReference type="PeptideAtlas" id="Q8VBZ0"/>
<dbReference type="ProteomicsDB" id="279529"/>
<dbReference type="Pumba" id="Q8VBZ0"/>
<dbReference type="UCSC" id="uc009vdc.1">
    <property type="organism name" value="mouse"/>
</dbReference>
<dbReference type="AGR" id="MGI:2181510"/>
<dbReference type="MGI" id="MGI:2181510">
    <property type="gene designation" value="Dhrsx"/>
</dbReference>
<dbReference type="eggNOG" id="KOG1208">
    <property type="taxonomic scope" value="Eukaryota"/>
</dbReference>
<dbReference type="InParanoid" id="Q8VBZ0"/>
<dbReference type="PhylomeDB" id="Q8VBZ0"/>
<dbReference type="UniPathway" id="UPA00378"/>
<dbReference type="PRO" id="PR:Q8VBZ0"/>
<dbReference type="Proteomes" id="UP000000589">
    <property type="component" value="Unplaced"/>
</dbReference>
<dbReference type="RNAct" id="Q8VBZ0">
    <property type="molecule type" value="protein"/>
</dbReference>
<dbReference type="GO" id="GO:0005576">
    <property type="term" value="C:extracellular region"/>
    <property type="evidence" value="ECO:0000250"/>
    <property type="project" value="UniProtKB"/>
</dbReference>
<dbReference type="GO" id="GO:0005811">
    <property type="term" value="C:lipid droplet"/>
    <property type="evidence" value="ECO:0000250"/>
    <property type="project" value="UniProtKB"/>
</dbReference>
<dbReference type="GO" id="GO:0160197">
    <property type="term" value="F:dolichal reductase [NAD(P)+] activity"/>
    <property type="evidence" value="ECO:0000250"/>
    <property type="project" value="UniProtKB"/>
</dbReference>
<dbReference type="GO" id="GO:0160196">
    <property type="term" value="F:polyprenol dehydrogenase activity"/>
    <property type="evidence" value="ECO:0000250"/>
    <property type="project" value="UniProtKB"/>
</dbReference>
<dbReference type="GO" id="GO:0019408">
    <property type="term" value="P:dolichol biosynthetic process"/>
    <property type="evidence" value="ECO:0000250"/>
    <property type="project" value="UniProtKB"/>
</dbReference>
<dbReference type="GO" id="GO:0010508">
    <property type="term" value="P:positive regulation of autophagy"/>
    <property type="evidence" value="ECO:0000250"/>
    <property type="project" value="UniProtKB"/>
</dbReference>
<dbReference type="CDD" id="cd05327">
    <property type="entry name" value="retinol-DH_like_SDR_c_like"/>
    <property type="match status" value="1"/>
</dbReference>
<dbReference type="FunFam" id="3.40.50.720:FF:000490">
    <property type="entry name" value="Dehydrogenase/reductase SDR family member on chromosome X"/>
    <property type="match status" value="1"/>
</dbReference>
<dbReference type="Gene3D" id="3.40.50.720">
    <property type="entry name" value="NAD(P)-binding Rossmann-like Domain"/>
    <property type="match status" value="1"/>
</dbReference>
<dbReference type="InterPro" id="IPR036291">
    <property type="entry name" value="NAD(P)-bd_dom_sf"/>
</dbReference>
<dbReference type="InterPro" id="IPR020904">
    <property type="entry name" value="Sc_DH/Rdtase_CS"/>
</dbReference>
<dbReference type="InterPro" id="IPR002347">
    <property type="entry name" value="SDR_fam"/>
</dbReference>
<dbReference type="PANTHER" id="PTHR24320:SF264">
    <property type="entry name" value="DEHYDROGENASE_REDUCTASE SDR FAMILY MEMBER ON CHROMOSOME X"/>
    <property type="match status" value="1"/>
</dbReference>
<dbReference type="PANTHER" id="PTHR24320">
    <property type="entry name" value="RETINOL DEHYDROGENASE"/>
    <property type="match status" value="1"/>
</dbReference>
<dbReference type="Pfam" id="PF00106">
    <property type="entry name" value="adh_short"/>
    <property type="match status" value="1"/>
</dbReference>
<dbReference type="PRINTS" id="PR00081">
    <property type="entry name" value="GDHRDH"/>
</dbReference>
<dbReference type="SUPFAM" id="SSF51735">
    <property type="entry name" value="NAD(P)-binding Rossmann-fold domains"/>
    <property type="match status" value="1"/>
</dbReference>
<dbReference type="PROSITE" id="PS00061">
    <property type="entry name" value="ADH_SHORT"/>
    <property type="match status" value="1"/>
</dbReference>
<feature type="chain" id="PRO_0000031975" description="Polyprenol dehydrogenase">
    <location>
        <begin position="1"/>
        <end position="335"/>
    </location>
</feature>
<feature type="active site" description="Proton acceptor" evidence="3">
    <location>
        <position position="208"/>
    </location>
</feature>
<feature type="binding site" evidence="2">
    <location>
        <position position="55"/>
    </location>
    <ligand>
        <name>NAD(+)</name>
        <dbReference type="ChEBI" id="CHEBI:57540"/>
    </ligand>
</feature>
<feature type="binding site" evidence="2">
    <location>
        <position position="208"/>
    </location>
    <ligand>
        <name>NAD(+)</name>
        <dbReference type="ChEBI" id="CHEBI:57540"/>
    </ligand>
</feature>
<feature type="binding site" evidence="2">
    <location>
        <position position="212"/>
    </location>
    <ligand>
        <name>NAD(+)</name>
        <dbReference type="ChEBI" id="CHEBI:57540"/>
    </ligand>
</feature>
<feature type="binding site" evidence="2">
    <location>
        <position position="245"/>
    </location>
    <ligand>
        <name>NAD(+)</name>
        <dbReference type="ChEBI" id="CHEBI:57540"/>
    </ligand>
</feature>
<feature type="sequence conflict" description="In Ref. 3; CAC82539." evidence="4" ref="3">
    <original>G</original>
    <variation>A</variation>
    <location>
        <position position="131"/>
    </location>
</feature>
<feature type="sequence conflict" description="In Ref. 3; CAC82539." evidence="4" ref="3">
    <original>H</original>
    <variation>Q</variation>
    <location>
        <position position="186"/>
    </location>
</feature>
<feature type="sequence conflict" description="In Ref. 3; CAC82539." evidence="4" ref="3">
    <original>L</original>
    <variation>M</variation>
    <location>
        <position position="247"/>
    </location>
</feature>
<reference key="1">
    <citation type="journal article" date="2005" name="Science">
        <title>The transcriptional landscape of the mammalian genome.</title>
        <authorList>
            <person name="Carninci P."/>
            <person name="Kasukawa T."/>
            <person name="Katayama S."/>
            <person name="Gough J."/>
            <person name="Frith M.C."/>
            <person name="Maeda N."/>
            <person name="Oyama R."/>
            <person name="Ravasi T."/>
            <person name="Lenhard B."/>
            <person name="Wells C."/>
            <person name="Kodzius R."/>
            <person name="Shimokawa K."/>
            <person name="Bajic V.B."/>
            <person name="Brenner S.E."/>
            <person name="Batalov S."/>
            <person name="Forrest A.R."/>
            <person name="Zavolan M."/>
            <person name="Davis M.J."/>
            <person name="Wilming L.G."/>
            <person name="Aidinis V."/>
            <person name="Allen J.E."/>
            <person name="Ambesi-Impiombato A."/>
            <person name="Apweiler R."/>
            <person name="Aturaliya R.N."/>
            <person name="Bailey T.L."/>
            <person name="Bansal M."/>
            <person name="Baxter L."/>
            <person name="Beisel K.W."/>
            <person name="Bersano T."/>
            <person name="Bono H."/>
            <person name="Chalk A.M."/>
            <person name="Chiu K.P."/>
            <person name="Choudhary V."/>
            <person name="Christoffels A."/>
            <person name="Clutterbuck D.R."/>
            <person name="Crowe M.L."/>
            <person name="Dalla E."/>
            <person name="Dalrymple B.P."/>
            <person name="de Bono B."/>
            <person name="Della Gatta G."/>
            <person name="di Bernardo D."/>
            <person name="Down T."/>
            <person name="Engstrom P."/>
            <person name="Fagiolini M."/>
            <person name="Faulkner G."/>
            <person name="Fletcher C.F."/>
            <person name="Fukushima T."/>
            <person name="Furuno M."/>
            <person name="Futaki S."/>
            <person name="Gariboldi M."/>
            <person name="Georgii-Hemming P."/>
            <person name="Gingeras T.R."/>
            <person name="Gojobori T."/>
            <person name="Green R.E."/>
            <person name="Gustincich S."/>
            <person name="Harbers M."/>
            <person name="Hayashi Y."/>
            <person name="Hensch T.K."/>
            <person name="Hirokawa N."/>
            <person name="Hill D."/>
            <person name="Huminiecki L."/>
            <person name="Iacono M."/>
            <person name="Ikeo K."/>
            <person name="Iwama A."/>
            <person name="Ishikawa T."/>
            <person name="Jakt M."/>
            <person name="Kanapin A."/>
            <person name="Katoh M."/>
            <person name="Kawasawa Y."/>
            <person name="Kelso J."/>
            <person name="Kitamura H."/>
            <person name="Kitano H."/>
            <person name="Kollias G."/>
            <person name="Krishnan S.P."/>
            <person name="Kruger A."/>
            <person name="Kummerfeld S.K."/>
            <person name="Kurochkin I.V."/>
            <person name="Lareau L.F."/>
            <person name="Lazarevic D."/>
            <person name="Lipovich L."/>
            <person name="Liu J."/>
            <person name="Liuni S."/>
            <person name="McWilliam S."/>
            <person name="Madan Babu M."/>
            <person name="Madera M."/>
            <person name="Marchionni L."/>
            <person name="Matsuda H."/>
            <person name="Matsuzawa S."/>
            <person name="Miki H."/>
            <person name="Mignone F."/>
            <person name="Miyake S."/>
            <person name="Morris K."/>
            <person name="Mottagui-Tabar S."/>
            <person name="Mulder N."/>
            <person name="Nakano N."/>
            <person name="Nakauchi H."/>
            <person name="Ng P."/>
            <person name="Nilsson R."/>
            <person name="Nishiguchi S."/>
            <person name="Nishikawa S."/>
            <person name="Nori F."/>
            <person name="Ohara O."/>
            <person name="Okazaki Y."/>
            <person name="Orlando V."/>
            <person name="Pang K.C."/>
            <person name="Pavan W.J."/>
            <person name="Pavesi G."/>
            <person name="Pesole G."/>
            <person name="Petrovsky N."/>
            <person name="Piazza S."/>
            <person name="Reed J."/>
            <person name="Reid J.F."/>
            <person name="Ring B.Z."/>
            <person name="Ringwald M."/>
            <person name="Rost B."/>
            <person name="Ruan Y."/>
            <person name="Salzberg S.L."/>
            <person name="Sandelin A."/>
            <person name="Schneider C."/>
            <person name="Schoenbach C."/>
            <person name="Sekiguchi K."/>
            <person name="Semple C.A."/>
            <person name="Seno S."/>
            <person name="Sessa L."/>
            <person name="Sheng Y."/>
            <person name="Shibata Y."/>
            <person name="Shimada H."/>
            <person name="Shimada K."/>
            <person name="Silva D."/>
            <person name="Sinclair B."/>
            <person name="Sperling S."/>
            <person name="Stupka E."/>
            <person name="Sugiura K."/>
            <person name="Sultana R."/>
            <person name="Takenaka Y."/>
            <person name="Taki K."/>
            <person name="Tammoja K."/>
            <person name="Tan S.L."/>
            <person name="Tang S."/>
            <person name="Taylor M.S."/>
            <person name="Tegner J."/>
            <person name="Teichmann S.A."/>
            <person name="Ueda H.R."/>
            <person name="van Nimwegen E."/>
            <person name="Verardo R."/>
            <person name="Wei C.L."/>
            <person name="Yagi K."/>
            <person name="Yamanishi H."/>
            <person name="Zabarovsky E."/>
            <person name="Zhu S."/>
            <person name="Zimmer A."/>
            <person name="Hide W."/>
            <person name="Bult C."/>
            <person name="Grimmond S.M."/>
            <person name="Teasdale R.D."/>
            <person name="Liu E.T."/>
            <person name="Brusic V."/>
            <person name="Quackenbush J."/>
            <person name="Wahlestedt C."/>
            <person name="Mattick J.S."/>
            <person name="Hume D.A."/>
            <person name="Kai C."/>
            <person name="Sasaki D."/>
            <person name="Tomaru Y."/>
            <person name="Fukuda S."/>
            <person name="Kanamori-Katayama M."/>
            <person name="Suzuki M."/>
            <person name="Aoki J."/>
            <person name="Arakawa T."/>
            <person name="Iida J."/>
            <person name="Imamura K."/>
            <person name="Itoh M."/>
            <person name="Kato T."/>
            <person name="Kawaji H."/>
            <person name="Kawagashira N."/>
            <person name="Kawashima T."/>
            <person name="Kojima M."/>
            <person name="Kondo S."/>
            <person name="Konno H."/>
            <person name="Nakano K."/>
            <person name="Ninomiya N."/>
            <person name="Nishio T."/>
            <person name="Okada M."/>
            <person name="Plessy C."/>
            <person name="Shibata K."/>
            <person name="Shiraki T."/>
            <person name="Suzuki S."/>
            <person name="Tagami M."/>
            <person name="Waki K."/>
            <person name="Watahiki A."/>
            <person name="Okamura-Oho Y."/>
            <person name="Suzuki H."/>
            <person name="Kawai J."/>
            <person name="Hayashizaki Y."/>
        </authorList>
    </citation>
    <scope>NUCLEOTIDE SEQUENCE [LARGE SCALE MRNA]</scope>
    <source>
        <strain>NOD</strain>
        <tissue>Spleen</tissue>
    </source>
</reference>
<reference key="2">
    <citation type="journal article" date="2004" name="Genome Res.">
        <title>The status, quality, and expansion of the NIH full-length cDNA project: the Mammalian Gene Collection (MGC).</title>
        <authorList>
            <consortium name="The MGC Project Team"/>
        </authorList>
    </citation>
    <scope>NUCLEOTIDE SEQUENCE [LARGE SCALE MRNA]</scope>
    <source>
        <tissue>Brain</tissue>
    </source>
</reference>
<reference key="3">
    <citation type="journal article" date="2001" name="Genome Res.">
        <title>Differential divergence of three human pseudoautosomal genes and their mouse homologs: implications for sex chromosome evolution.</title>
        <authorList>
            <person name="Gianfrancesco F."/>
            <person name="Sanges R."/>
            <person name="Esposito T."/>
            <person name="Tempesta S."/>
            <person name="Rao E."/>
            <person name="Rappold G."/>
            <person name="Archidiacono N."/>
            <person name="Graves J.A.M."/>
            <person name="Forabosco A."/>
            <person name="D'Urso M."/>
        </authorList>
    </citation>
    <scope>NUCLEOTIDE SEQUENCE [MRNA] OF 1-280</scope>
    <source>
        <strain>FVB/N</strain>
        <tissue>Embryo</tissue>
    </source>
</reference>
<reference key="4">
    <citation type="journal article" date="2010" name="Cell">
        <title>A tissue-specific atlas of mouse protein phosphorylation and expression.</title>
        <authorList>
            <person name="Huttlin E.L."/>
            <person name="Jedrychowski M.P."/>
            <person name="Elias J.E."/>
            <person name="Goswami T."/>
            <person name="Rad R."/>
            <person name="Beausoleil S.A."/>
            <person name="Villen J."/>
            <person name="Haas W."/>
            <person name="Sowa M.E."/>
            <person name="Gygi S.P."/>
        </authorList>
    </citation>
    <scope>IDENTIFICATION BY MASS SPECTROMETRY [LARGE SCALE ANALYSIS]</scope>
    <source>
        <tissue>Kidney</tissue>
        <tissue>Liver</tissue>
        <tissue>Lung</tissue>
        <tissue>Testis</tissue>
    </source>
</reference>